<feature type="signal peptide" evidence="1">
    <location>
        <begin position="1"/>
        <end position="19"/>
    </location>
</feature>
<feature type="chain" id="PRO_0000005687" description="Lysis protein for colicin E7">
    <location>
        <begin position="20"/>
        <end position="47"/>
    </location>
</feature>
<feature type="lipid moiety-binding region" description="N-palmitoyl cysteine" evidence="1">
    <location>
        <position position="20"/>
    </location>
</feature>
<feature type="lipid moiety-binding region" description="S-diacylglycerol cysteine" evidence="1">
    <location>
        <position position="20"/>
    </location>
</feature>
<geneLocation type="plasmid">
    <name>ColE7</name>
</geneLocation>
<reference key="1">
    <citation type="journal article" date="1991" name="J. Gen. Microbiol.">
        <title>Cloning and characterization of the ColE7 plasmid.</title>
        <authorList>
            <person name="Chak K.-F."/>
            <person name="Kuo W.S."/>
            <person name="Lu F.M."/>
            <person name="James R."/>
        </authorList>
    </citation>
    <scope>NUCLEOTIDE SEQUENCE [GENOMIC DNA]</scope>
</reference>
<reference key="2">
    <citation type="submission" date="1994-07" db="EMBL/GenBank/DDBJ databases">
        <authorList>
            <person name="Lau P.C.K."/>
            <person name="Parsons M."/>
        </authorList>
    </citation>
    <scope>NUCLEOTIDE SEQUENCE [GENOMIC DNA]</scope>
    <source>
        <strain>K317</strain>
    </source>
</reference>
<proteinExistence type="inferred from homology"/>
<sequence>MKKITGIILLLLAAIILAACQANYIRDVQGGTVSPSSTAELTGVETQ</sequence>
<organism>
    <name type="scientific">Escherichia coli</name>
    <dbReference type="NCBI Taxonomy" id="562"/>
    <lineage>
        <taxon>Bacteria</taxon>
        <taxon>Pseudomonadati</taxon>
        <taxon>Pseudomonadota</taxon>
        <taxon>Gammaproteobacteria</taxon>
        <taxon>Enterobacterales</taxon>
        <taxon>Enterobacteriaceae</taxon>
        <taxon>Escherichia</taxon>
    </lineage>
</organism>
<dbReference type="EMBL" id="M57540">
    <property type="protein sequence ID" value="AAA23072.1"/>
    <property type="molecule type" value="Genomic_DNA"/>
</dbReference>
<dbReference type="EMBL" id="X63620">
    <property type="protein sequence ID" value="CAA45166.1"/>
    <property type="molecule type" value="Genomic_DNA"/>
</dbReference>
<dbReference type="PIR" id="S27395">
    <property type="entry name" value="S27395"/>
</dbReference>
<dbReference type="RefSeq" id="WP_001560790.1">
    <property type="nucleotide sequence ID" value="NZ_WSXM01000092.1"/>
</dbReference>
<dbReference type="TCDB" id="1.A.73.1.3">
    <property type="family name" value="the colicin lysis protein (clp) family"/>
</dbReference>
<dbReference type="PATRIC" id="fig|562.7275.peg.4941"/>
<dbReference type="GO" id="GO:0009279">
    <property type="term" value="C:cell outer membrane"/>
    <property type="evidence" value="ECO:0007669"/>
    <property type="project" value="UniProtKB-SubCell"/>
</dbReference>
<dbReference type="GO" id="GO:0019835">
    <property type="term" value="P:cytolysis"/>
    <property type="evidence" value="ECO:0007669"/>
    <property type="project" value="InterPro"/>
</dbReference>
<dbReference type="InterPro" id="IPR003059">
    <property type="entry name" value="Lysis_col"/>
</dbReference>
<dbReference type="Pfam" id="PF02402">
    <property type="entry name" value="Lysis_col"/>
    <property type="match status" value="1"/>
</dbReference>
<dbReference type="PRINTS" id="PR01297">
    <property type="entry name" value="LYSISCOLICIN"/>
</dbReference>
<dbReference type="PROSITE" id="PS51257">
    <property type="entry name" value="PROKAR_LIPOPROTEIN"/>
    <property type="match status" value="1"/>
</dbReference>
<keyword id="KW-0998">Cell outer membrane</keyword>
<keyword id="KW-0449">Lipoprotein</keyword>
<keyword id="KW-0472">Membrane</keyword>
<keyword id="KW-0564">Palmitate</keyword>
<keyword id="KW-0614">Plasmid</keyword>
<keyword id="KW-0732">Signal</keyword>
<gene>
    <name type="primary">lys</name>
    <name type="synonym">celE7</name>
</gene>
<name>LYS7_ECOLX</name>
<comment type="function">
    <text>Lysis proteins are required for both colicin release and partial cell lysis.</text>
</comment>
<comment type="subcellular location">
    <subcellularLocation>
        <location evidence="2">Cell outer membrane</location>
        <topology evidence="1">Lipid-anchor</topology>
    </subcellularLocation>
</comment>
<accession>Q03709</accession>
<evidence type="ECO:0000255" key="1">
    <source>
        <dbReference type="PROSITE-ProRule" id="PRU00303"/>
    </source>
</evidence>
<evidence type="ECO:0000305" key="2"/>
<protein>
    <recommendedName>
        <fullName>Lysis protein for colicin E7</fullName>
    </recommendedName>
</protein>